<accession>Q8SPN1</accession>
<sequence>MAAQNGNASFPANFSIPQEHASSLPFNFSYDDYDLPLDEDEDMTKTQTFFAAKIVIGVALVGIMLTCGIGNFVFITALTRYKKLRNLTNLLIANLAISDFLVAIICCPFEMDYYVVHQLSWEHGHVLCACINYLRTVSLYVSTNALLAIAIDRYLAIVHPLKPRMNYQTASFLIALVWMVSILISIPSAYFTKETVLFIVKNQKKIFCGQVWPVDQQLYYKSYFLFVFGIEFLGPVFTMTLCYARISRELWFKAVPGFQTEQIRKRLRCRRKTVLVLMCILTAYVLCWAPFYGFTIVRDFFPTVFVKEKHYLTAFYVVECIAMSNSMINTVCFVTVKNSTMKYFKKMLLLHWRPSHHGSKSSADLDLKTSRLPATEEVDCIRLK</sequence>
<keyword id="KW-1003">Cell membrane</keyword>
<keyword id="KW-1015">Disulfide bond</keyword>
<keyword id="KW-0297">G-protein coupled receptor</keyword>
<keyword id="KW-0325">Glycoprotein</keyword>
<keyword id="KW-0472">Membrane</keyword>
<keyword id="KW-0675">Receptor</keyword>
<keyword id="KW-1185">Reference proteome</keyword>
<keyword id="KW-0807">Transducer</keyword>
<keyword id="KW-0812">Transmembrane</keyword>
<keyword id="KW-1133">Transmembrane helix</keyword>
<proteinExistence type="evidence at transcript level"/>
<comment type="function">
    <text evidence="1">Receptor for prokineticin 2. Exclusively coupled to the G(q) subclass of heteromeric G proteins. Activation leads to mobilization of calcium, stimulation of phosphoinositide turnover and activation of p44/p42 mitogen-activated protein kinase (By similarity).</text>
</comment>
<comment type="subunit">
    <text evidence="1">Homodimer.</text>
</comment>
<comment type="subcellular location">
    <subcellularLocation>
        <location evidence="2">Cell membrane</location>
        <topology>Multi-pass membrane protein</topology>
    </subcellularLocation>
</comment>
<comment type="similarity">
    <text evidence="4">Belongs to the G-protein coupled receptor 1 family.</text>
</comment>
<organism>
    <name type="scientific">Bos taurus</name>
    <name type="common">Bovine</name>
    <dbReference type="NCBI Taxonomy" id="9913"/>
    <lineage>
        <taxon>Eukaryota</taxon>
        <taxon>Metazoa</taxon>
        <taxon>Chordata</taxon>
        <taxon>Craniata</taxon>
        <taxon>Vertebrata</taxon>
        <taxon>Euteleostomi</taxon>
        <taxon>Mammalia</taxon>
        <taxon>Eutheria</taxon>
        <taxon>Laurasiatheria</taxon>
        <taxon>Artiodactyla</taxon>
        <taxon>Ruminantia</taxon>
        <taxon>Pecora</taxon>
        <taxon>Bovidae</taxon>
        <taxon>Bovinae</taxon>
        <taxon>Bos</taxon>
    </lineage>
</organism>
<dbReference type="EMBL" id="AY089973">
    <property type="protein sequence ID" value="AAM11889.1"/>
    <property type="molecule type" value="mRNA"/>
</dbReference>
<dbReference type="RefSeq" id="NP_777065.1">
    <property type="nucleotide sequence ID" value="NM_174640.1"/>
</dbReference>
<dbReference type="RefSeq" id="XP_005214494.1">
    <property type="nucleotide sequence ID" value="XM_005214437.5"/>
</dbReference>
<dbReference type="SMR" id="Q8SPN1"/>
<dbReference type="FunCoup" id="Q8SPN1">
    <property type="interactions" value="272"/>
</dbReference>
<dbReference type="STRING" id="9913.ENSBTAP00000021097"/>
<dbReference type="GlyCosmos" id="Q8SPN1">
    <property type="glycosylation" value="3 sites, No reported glycans"/>
</dbReference>
<dbReference type="GlyGen" id="Q8SPN1">
    <property type="glycosylation" value="3 sites"/>
</dbReference>
<dbReference type="PaxDb" id="9913-ENSBTAP00000021097"/>
<dbReference type="Ensembl" id="ENSBTAT00000021097.5">
    <property type="protein sequence ID" value="ENSBTAP00000021097.3"/>
    <property type="gene ID" value="ENSBTAG00000015872.5"/>
</dbReference>
<dbReference type="GeneID" id="282431"/>
<dbReference type="KEGG" id="bta:282431"/>
<dbReference type="CTD" id="128674"/>
<dbReference type="VEuPathDB" id="HostDB:ENSBTAG00000015872"/>
<dbReference type="VGNC" id="VGNC:33363">
    <property type="gene designation" value="PROKR2"/>
</dbReference>
<dbReference type="eggNOG" id="KOG3656">
    <property type="taxonomic scope" value="Eukaryota"/>
</dbReference>
<dbReference type="GeneTree" id="ENSGT00940000154544"/>
<dbReference type="HOGENOM" id="CLU_009579_6_0_1"/>
<dbReference type="InParanoid" id="Q8SPN1"/>
<dbReference type="OMA" id="YPHGGTT"/>
<dbReference type="OrthoDB" id="10053194at2759"/>
<dbReference type="TreeFam" id="TF315303"/>
<dbReference type="Reactome" id="R-BTA-375276">
    <property type="pathway name" value="Peptide ligand-binding receptors"/>
</dbReference>
<dbReference type="Reactome" id="R-BTA-416476">
    <property type="pathway name" value="G alpha (q) signalling events"/>
</dbReference>
<dbReference type="Proteomes" id="UP000009136">
    <property type="component" value="Chromosome 13"/>
</dbReference>
<dbReference type="Bgee" id="ENSBTAG00000015872">
    <property type="expression patterns" value="Expressed in semen and 17 other cell types or tissues"/>
</dbReference>
<dbReference type="GO" id="GO:0005886">
    <property type="term" value="C:plasma membrane"/>
    <property type="evidence" value="ECO:0000250"/>
    <property type="project" value="UniProtKB"/>
</dbReference>
<dbReference type="GO" id="GO:0004930">
    <property type="term" value="F:G protein-coupled receptor activity"/>
    <property type="evidence" value="ECO:0000318"/>
    <property type="project" value="GO_Central"/>
</dbReference>
<dbReference type="GO" id="GO:0004983">
    <property type="term" value="F:neuropeptide Y receptor activity"/>
    <property type="evidence" value="ECO:0007669"/>
    <property type="project" value="InterPro"/>
</dbReference>
<dbReference type="GO" id="GO:0032870">
    <property type="term" value="P:cellular response to hormone stimulus"/>
    <property type="evidence" value="ECO:0000318"/>
    <property type="project" value="GO_Central"/>
</dbReference>
<dbReference type="GO" id="GO:0007623">
    <property type="term" value="P:circadian rhythm"/>
    <property type="evidence" value="ECO:0000318"/>
    <property type="project" value="GO_Central"/>
</dbReference>
<dbReference type="GO" id="GO:0007186">
    <property type="term" value="P:G protein-coupled receptor signaling pathway"/>
    <property type="evidence" value="ECO:0000318"/>
    <property type="project" value="GO_Central"/>
</dbReference>
<dbReference type="CDD" id="cd15204">
    <property type="entry name" value="7tmA_prokineticin-R"/>
    <property type="match status" value="1"/>
</dbReference>
<dbReference type="FunFam" id="1.20.1070.10:FF:000069">
    <property type="entry name" value="Prokineticin receptor 2"/>
    <property type="match status" value="1"/>
</dbReference>
<dbReference type="Gene3D" id="1.20.1070.10">
    <property type="entry name" value="Rhodopsin 7-helix transmembrane proteins"/>
    <property type="match status" value="1"/>
</dbReference>
<dbReference type="InterPro" id="IPR000276">
    <property type="entry name" value="GPCR_Rhodpsn"/>
</dbReference>
<dbReference type="InterPro" id="IPR017452">
    <property type="entry name" value="GPCR_Rhodpsn_7TM"/>
</dbReference>
<dbReference type="InterPro" id="IPR000611">
    <property type="entry name" value="NPY_rcpt"/>
</dbReference>
<dbReference type="PANTHER" id="PTHR24238">
    <property type="entry name" value="G-PROTEIN COUPLED RECEPTOR"/>
    <property type="match status" value="1"/>
</dbReference>
<dbReference type="PANTHER" id="PTHR24238:SF74">
    <property type="entry name" value="PROKINETICIN RECEPTOR 2"/>
    <property type="match status" value="1"/>
</dbReference>
<dbReference type="Pfam" id="PF00001">
    <property type="entry name" value="7tm_1"/>
    <property type="match status" value="1"/>
</dbReference>
<dbReference type="PRINTS" id="PR00237">
    <property type="entry name" value="GPCRRHODOPSN"/>
</dbReference>
<dbReference type="PRINTS" id="PR01012">
    <property type="entry name" value="NRPEPTIDEYR"/>
</dbReference>
<dbReference type="SUPFAM" id="SSF81321">
    <property type="entry name" value="Family A G protein-coupled receptor-like"/>
    <property type="match status" value="1"/>
</dbReference>
<dbReference type="PROSITE" id="PS00237">
    <property type="entry name" value="G_PROTEIN_RECEP_F1_1"/>
    <property type="match status" value="1"/>
</dbReference>
<dbReference type="PROSITE" id="PS50262">
    <property type="entry name" value="G_PROTEIN_RECEP_F1_2"/>
    <property type="match status" value="1"/>
</dbReference>
<protein>
    <recommendedName>
        <fullName>Prokineticin receptor 2</fullName>
        <shortName>PK-R2</shortName>
    </recommendedName>
    <alternativeName>
        <fullName>G-protein coupled receptor 73-like 1</fullName>
    </alternativeName>
    <alternativeName>
        <fullName>G-protein coupled receptor I5E</fullName>
    </alternativeName>
</protein>
<evidence type="ECO:0000250" key="1"/>
<evidence type="ECO:0000250" key="2">
    <source>
        <dbReference type="UniProtKB" id="Q8NFJ6"/>
    </source>
</evidence>
<evidence type="ECO:0000255" key="3"/>
<evidence type="ECO:0000255" key="4">
    <source>
        <dbReference type="PROSITE-ProRule" id="PRU00521"/>
    </source>
</evidence>
<feature type="chain" id="PRO_0000070082" description="Prokineticin receptor 2">
    <location>
        <begin position="1"/>
        <end position="384"/>
    </location>
</feature>
<feature type="topological domain" description="Extracellular" evidence="3">
    <location>
        <begin position="1"/>
        <end position="53"/>
    </location>
</feature>
<feature type="transmembrane region" description="Helical; Name=1" evidence="3">
    <location>
        <begin position="54"/>
        <end position="74"/>
    </location>
</feature>
<feature type="topological domain" description="Cytoplasmic" evidence="3">
    <location>
        <begin position="75"/>
        <end position="89"/>
    </location>
</feature>
<feature type="transmembrane region" description="Helical; Name=2" evidence="3">
    <location>
        <begin position="90"/>
        <end position="110"/>
    </location>
</feature>
<feature type="topological domain" description="Extracellular" evidence="3">
    <location>
        <begin position="111"/>
        <end position="137"/>
    </location>
</feature>
<feature type="transmembrane region" description="Helical; Name=3" evidence="3">
    <location>
        <begin position="138"/>
        <end position="158"/>
    </location>
</feature>
<feature type="topological domain" description="Cytoplasmic" evidence="3">
    <location>
        <begin position="159"/>
        <end position="171"/>
    </location>
</feature>
<feature type="transmembrane region" description="Helical; Name=4" evidence="3">
    <location>
        <begin position="172"/>
        <end position="192"/>
    </location>
</feature>
<feature type="topological domain" description="Extracellular" evidence="3">
    <location>
        <begin position="193"/>
        <end position="223"/>
    </location>
</feature>
<feature type="transmembrane region" description="Helical; Name=5" evidence="3">
    <location>
        <begin position="224"/>
        <end position="244"/>
    </location>
</feature>
<feature type="topological domain" description="Cytoplasmic" evidence="3">
    <location>
        <begin position="245"/>
        <end position="273"/>
    </location>
</feature>
<feature type="transmembrane region" description="Helical; Name=6" evidence="3">
    <location>
        <begin position="274"/>
        <end position="294"/>
    </location>
</feature>
<feature type="topological domain" description="Extracellular" evidence="3">
    <location>
        <begin position="295"/>
        <end position="313"/>
    </location>
</feature>
<feature type="transmembrane region" description="Helical; Name=7" evidence="3">
    <location>
        <begin position="314"/>
        <end position="334"/>
    </location>
</feature>
<feature type="topological domain" description="Cytoplasmic" evidence="3">
    <location>
        <begin position="335"/>
        <end position="384"/>
    </location>
</feature>
<feature type="glycosylation site" description="N-linked (GlcNAc...) asparagine" evidence="3">
    <location>
        <position position="7"/>
    </location>
</feature>
<feature type="glycosylation site" description="N-linked (GlcNAc...) asparagine" evidence="3">
    <location>
        <position position="13"/>
    </location>
</feature>
<feature type="glycosylation site" description="N-linked (GlcNAc...) asparagine" evidence="3">
    <location>
        <position position="27"/>
    </location>
</feature>
<feature type="disulfide bond" evidence="4">
    <location>
        <begin position="128"/>
        <end position="208"/>
    </location>
</feature>
<gene>
    <name type="primary">PROKR2</name>
    <name type="synonym">GPR73L1</name>
    <name type="synonym">PKR2</name>
</gene>
<name>PKR2_BOVIN</name>
<reference key="1">
    <citation type="journal article" date="2002" name="Biochem. Biophys. Res. Commun.">
        <title>Isolation and identification of EG-VEGF/prokineticins as cognate ligands for two orphan G-protein-coupled receptors.</title>
        <authorList>
            <person name="Masuda Y."/>
            <person name="Takatsu Y."/>
            <person name="Terao Y."/>
            <person name="Kumano S."/>
            <person name="Ishibashi Y."/>
            <person name="Suenaga M."/>
            <person name="Abe M."/>
            <person name="Fukusumi S."/>
            <person name="Watanabe T."/>
            <person name="Shintani Y."/>
            <person name="Yamada T."/>
            <person name="Hinuma S."/>
            <person name="Inatomi N."/>
            <person name="Ohtaki T."/>
            <person name="Onda H."/>
            <person name="Fujino M."/>
        </authorList>
    </citation>
    <scope>NUCLEOTIDE SEQUENCE [MRNA]</scope>
</reference>